<protein>
    <recommendedName>
        <fullName>30 kDa neutral phosphatase</fullName>
        <shortName>NPTase</shortName>
        <ecNumber>3.1.-.-</ecNumber>
    </recommendedName>
</protein>
<comment type="function">
    <text>Highly cationic enzyme that can bind human or rat immunoglobulins as well as serum albumin, and could therefore be involved in post-infectious sequelae.</text>
</comment>
<comment type="biophysicochemical properties">
    <phDependence>
        <text>Optimum pH is 7.2-7.5. Poorly active at pH higher than 10 or lower than 5.</text>
    </phDependence>
</comment>
<proteinExistence type="evidence at protein level"/>
<dbReference type="EC" id="3.1.-.-"/>
<dbReference type="PIR" id="S58708">
    <property type="entry name" value="S58708"/>
</dbReference>
<dbReference type="GO" id="GO:0016787">
    <property type="term" value="F:hydrolase activity"/>
    <property type="evidence" value="ECO:0007669"/>
    <property type="project" value="UniProtKB-KW"/>
</dbReference>
<reference key="1">
    <citation type="journal article" date="1994" name="APMIS">
        <title>Staphylococcal neutral phosphatase. A highly cationic molecule with binding properties for immunoglobulin.</title>
        <authorList>
            <person name="Yousif Y."/>
            <person name="Schiltz E."/>
            <person name="Okada K."/>
            <person name="Batsford S."/>
            <person name="Vogt A."/>
        </authorList>
    </citation>
    <scope>PROTEIN SEQUENCE</scope>
    <source>
        <strain>ATCC 25923 / DSM 1104 / JCM 2413 / NBRC 14462 / NCIMB 12702 / NCTC 12981 / Seattle 1945</strain>
    </source>
</reference>
<organism>
    <name type="scientific">Staphylococcus aureus</name>
    <dbReference type="NCBI Taxonomy" id="1280"/>
    <lineage>
        <taxon>Bacteria</taxon>
        <taxon>Bacillati</taxon>
        <taxon>Bacillota</taxon>
        <taxon>Bacilli</taxon>
        <taxon>Bacillales</taxon>
        <taxon>Staphylococcaceae</taxon>
        <taxon>Staphylococcus</taxon>
    </lineage>
</organism>
<keyword id="KW-0903">Direct protein sequencing</keyword>
<keyword id="KW-0378">Hydrolase</keyword>
<evidence type="ECO:0000256" key="1">
    <source>
        <dbReference type="SAM" id="MobiDB-lite"/>
    </source>
</evidence>
<accession>P21222</accession>
<feature type="chain" id="PRO_0000057935" description="30 kDa neutral phosphatase">
    <location>
        <begin position="1"/>
        <end position="35" status="greater than"/>
    </location>
</feature>
<feature type="region of interest" description="Disordered" evidence="1">
    <location>
        <begin position="1"/>
        <end position="35"/>
    </location>
</feature>
<feature type="compositionally biased region" description="Polar residues" evidence="1">
    <location>
        <begin position="1"/>
        <end position="28"/>
    </location>
</feature>
<feature type="non-terminal residue">
    <location>
        <position position="35"/>
    </location>
</feature>
<name>NP30_STAAU</name>
<sequence>KSSAEVQQTQQASIPASQKANLGNQNNIMXVAXYQ</sequence>